<keyword id="KW-0378">Hydrolase</keyword>
<keyword id="KW-1185">Reference proteome</keyword>
<proteinExistence type="inferred from homology"/>
<accession>P9WLR0</accession>
<accession>L0TAJ1</accession>
<accession>Q50599</accession>
<feature type="chain" id="PRO_0000427435" description="Putative hydrolase LipZ">
    <location>
        <begin position="1"/>
        <end position="288"/>
    </location>
</feature>
<protein>
    <recommendedName>
        <fullName evidence="1">Putative hydrolase LipZ</fullName>
        <ecNumber evidence="1">3.-.-.-</ecNumber>
    </recommendedName>
</protein>
<reference key="1">
    <citation type="journal article" date="2002" name="J. Bacteriol.">
        <title>Whole-genome comparison of Mycobacterium tuberculosis clinical and laboratory strains.</title>
        <authorList>
            <person name="Fleischmann R.D."/>
            <person name="Alland D."/>
            <person name="Eisen J.A."/>
            <person name="Carpenter L."/>
            <person name="White O."/>
            <person name="Peterson J.D."/>
            <person name="DeBoy R.T."/>
            <person name="Dodson R.J."/>
            <person name="Gwinn M.L."/>
            <person name="Haft D.H."/>
            <person name="Hickey E.K."/>
            <person name="Kolonay J.F."/>
            <person name="Nelson W.C."/>
            <person name="Umayam L.A."/>
            <person name="Ermolaeva M.D."/>
            <person name="Salzberg S.L."/>
            <person name="Delcher A."/>
            <person name="Utterback T.R."/>
            <person name="Weidman J.F."/>
            <person name="Khouri H.M."/>
            <person name="Gill J."/>
            <person name="Mikula A."/>
            <person name="Bishai W."/>
            <person name="Jacobs W.R. Jr."/>
            <person name="Venter J.C."/>
            <person name="Fraser C.M."/>
        </authorList>
    </citation>
    <scope>NUCLEOTIDE SEQUENCE [LARGE SCALE GENOMIC DNA]</scope>
    <source>
        <strain>CDC 1551 / Oshkosh</strain>
    </source>
</reference>
<comment type="similarity">
    <text evidence="2">Belongs to the AB hydrolase superfamily.</text>
</comment>
<evidence type="ECO:0000250" key="1">
    <source>
        <dbReference type="UniProtKB" id="P9WLR1"/>
    </source>
</evidence>
<evidence type="ECO:0000305" key="2"/>
<gene>
    <name evidence="1" type="primary">lipZ</name>
    <name type="ordered locus">MT1882</name>
</gene>
<sequence length="288" mass="31676">MTSPSVREWRDGGRWLPTAVGKVFVRSGPGDTPTMLLLHGYPSSSFDFRAVIPHLTGQAWVTMDFLGFGLSDKPRPHRYSLLEQAHLVETVVAHTVTGAVVVLAHDMGTSVTTELLARDLDGRLPFDLRRAVLSNGSVILERASLRPIQKVLRSPLGPVAARLVSRGGFTRGFGRIFSPAHPLSAQEAQAQWELLCYNDGNRIPHLLISYLDERIRHAQRWHGAVRDWPKPLGFVWGLDDPVATTNVLNGLRELRPSAAVVELPGLGHYPQVEAPKAYAEAALSLLVD</sequence>
<dbReference type="EC" id="3.-.-.-" evidence="1"/>
<dbReference type="EMBL" id="AE000516">
    <property type="protein sequence ID" value="AAK46154.1"/>
    <property type="molecule type" value="Genomic_DNA"/>
</dbReference>
<dbReference type="PIR" id="C70722">
    <property type="entry name" value="C70722"/>
</dbReference>
<dbReference type="RefSeq" id="WP_003409255.1">
    <property type="nucleotide sequence ID" value="NZ_KK341227.1"/>
</dbReference>
<dbReference type="SMR" id="P9WLR0"/>
<dbReference type="ESTHER" id="myctu-Y1834">
    <property type="family name" value="MEST-like"/>
</dbReference>
<dbReference type="KEGG" id="mtc:MT1882"/>
<dbReference type="PATRIC" id="fig|83331.31.peg.2026"/>
<dbReference type="HOGENOM" id="CLU_020336_3_0_11"/>
<dbReference type="Proteomes" id="UP000001020">
    <property type="component" value="Chromosome"/>
</dbReference>
<dbReference type="GO" id="GO:0016020">
    <property type="term" value="C:membrane"/>
    <property type="evidence" value="ECO:0007669"/>
    <property type="project" value="TreeGrafter"/>
</dbReference>
<dbReference type="GO" id="GO:0047372">
    <property type="term" value="F:monoacylglycerol lipase activity"/>
    <property type="evidence" value="ECO:0007669"/>
    <property type="project" value="TreeGrafter"/>
</dbReference>
<dbReference type="GO" id="GO:0046464">
    <property type="term" value="P:acylglycerol catabolic process"/>
    <property type="evidence" value="ECO:0007669"/>
    <property type="project" value="TreeGrafter"/>
</dbReference>
<dbReference type="Gene3D" id="3.40.50.1820">
    <property type="entry name" value="alpha/beta hydrolase"/>
    <property type="match status" value="1"/>
</dbReference>
<dbReference type="InterPro" id="IPR000073">
    <property type="entry name" value="AB_hydrolase_1"/>
</dbReference>
<dbReference type="InterPro" id="IPR029058">
    <property type="entry name" value="AB_hydrolase_fold"/>
</dbReference>
<dbReference type="InterPro" id="IPR050266">
    <property type="entry name" value="AB_hydrolase_sf"/>
</dbReference>
<dbReference type="InterPro" id="IPR000639">
    <property type="entry name" value="Epox_hydrolase-like"/>
</dbReference>
<dbReference type="PANTHER" id="PTHR43798:SF33">
    <property type="entry name" value="HYDROLASE, PUTATIVE (AFU_ORTHOLOGUE AFUA_2G14860)-RELATED"/>
    <property type="match status" value="1"/>
</dbReference>
<dbReference type="PANTHER" id="PTHR43798">
    <property type="entry name" value="MONOACYLGLYCEROL LIPASE"/>
    <property type="match status" value="1"/>
</dbReference>
<dbReference type="Pfam" id="PF00561">
    <property type="entry name" value="Abhydrolase_1"/>
    <property type="match status" value="1"/>
</dbReference>
<dbReference type="PRINTS" id="PR00412">
    <property type="entry name" value="EPOXHYDRLASE"/>
</dbReference>
<dbReference type="SUPFAM" id="SSF53474">
    <property type="entry name" value="alpha/beta-Hydrolases"/>
    <property type="match status" value="1"/>
</dbReference>
<name>LIPZ_MYCTO</name>
<organism>
    <name type="scientific">Mycobacterium tuberculosis (strain CDC 1551 / Oshkosh)</name>
    <dbReference type="NCBI Taxonomy" id="83331"/>
    <lineage>
        <taxon>Bacteria</taxon>
        <taxon>Bacillati</taxon>
        <taxon>Actinomycetota</taxon>
        <taxon>Actinomycetes</taxon>
        <taxon>Mycobacteriales</taxon>
        <taxon>Mycobacteriaceae</taxon>
        <taxon>Mycobacterium</taxon>
        <taxon>Mycobacterium tuberculosis complex</taxon>
    </lineage>
</organism>